<sequence length="33" mass="3818">MEALVYTFLLVSTLGIIFFAIFFREPPKVPTKK</sequence>
<keyword id="KW-0150">Chloroplast</keyword>
<keyword id="KW-0472">Membrane</keyword>
<keyword id="KW-0602">Photosynthesis</keyword>
<keyword id="KW-0604">Photosystem II</keyword>
<keyword id="KW-0934">Plastid</keyword>
<keyword id="KW-0793">Thylakoid</keyword>
<keyword id="KW-0812">Transmembrane</keyword>
<keyword id="KW-1133">Transmembrane helix</keyword>
<proteinExistence type="inferred from homology"/>
<comment type="function">
    <text evidence="1">Found at the monomer-monomer interface of the photosystem II (PS II) dimer, plays a role in assembly and dimerization of PSII. PSII is a light-driven water plastoquinone oxidoreductase, using light energy to abstract electrons from H(2)O, generating a proton gradient subsequently used for ATP formation.</text>
</comment>
<comment type="subunit">
    <text evidence="1">PSII is composed of 1 copy each of membrane proteins PsbA, PsbB, PsbC, PsbD, PsbE, PsbF, PsbH, PsbI, PsbJ, PsbK, PsbL, PsbM, PsbT, PsbY, PsbZ, Psb30/Ycf12, at least 3 peripheral proteins of the oxygen-evolving complex and a large number of cofactors. It forms dimeric complexes.</text>
</comment>
<comment type="subcellular location">
    <subcellularLocation>
        <location evidence="1">Plastid</location>
        <location evidence="1">Chloroplast thylakoid membrane</location>
        <topology evidence="1">Single-pass membrane protein</topology>
    </subcellularLocation>
</comment>
<comment type="similarity">
    <text evidence="1">Belongs to the PsbT family.</text>
</comment>
<gene>
    <name evidence="1" type="primary">psbT</name>
</gene>
<dbReference type="EMBL" id="AY007469">
    <property type="protein sequence ID" value="AAG12388.1"/>
    <property type="molecule type" value="Genomic_DNA"/>
</dbReference>
<dbReference type="SMR" id="Q7HIV9"/>
<dbReference type="GO" id="GO:0009535">
    <property type="term" value="C:chloroplast thylakoid membrane"/>
    <property type="evidence" value="ECO:0007669"/>
    <property type="project" value="UniProtKB-SubCell"/>
</dbReference>
<dbReference type="GO" id="GO:0009539">
    <property type="term" value="C:photosystem II reaction center"/>
    <property type="evidence" value="ECO:0007669"/>
    <property type="project" value="InterPro"/>
</dbReference>
<dbReference type="GO" id="GO:0015979">
    <property type="term" value="P:photosynthesis"/>
    <property type="evidence" value="ECO:0007669"/>
    <property type="project" value="UniProtKB-UniRule"/>
</dbReference>
<dbReference type="HAMAP" id="MF_00808">
    <property type="entry name" value="PSII_PsbT"/>
    <property type="match status" value="1"/>
</dbReference>
<dbReference type="InterPro" id="IPR001743">
    <property type="entry name" value="PSII_PsbT"/>
</dbReference>
<dbReference type="InterPro" id="IPR037268">
    <property type="entry name" value="PSII_PsbT_sf"/>
</dbReference>
<dbReference type="PANTHER" id="PTHR36411">
    <property type="match status" value="1"/>
</dbReference>
<dbReference type="PANTHER" id="PTHR36411:SF2">
    <property type="entry name" value="PHOTOSYSTEM II REACTION CENTER PROTEIN T"/>
    <property type="match status" value="1"/>
</dbReference>
<dbReference type="Pfam" id="PF01405">
    <property type="entry name" value="PsbT"/>
    <property type="match status" value="1"/>
</dbReference>
<dbReference type="SUPFAM" id="SSF161029">
    <property type="entry name" value="Photosystem II reaction center protein T, PsbT"/>
    <property type="match status" value="1"/>
</dbReference>
<protein>
    <recommendedName>
        <fullName evidence="1">Photosystem II reaction center protein T</fullName>
        <shortName evidence="1">PSII-T</shortName>
    </recommendedName>
</protein>
<feature type="chain" id="PRO_0000217976" description="Photosystem II reaction center protein T">
    <location>
        <begin position="1"/>
        <end position="33"/>
    </location>
</feature>
<feature type="transmembrane region" description="Helical" evidence="1">
    <location>
        <begin position="3"/>
        <end position="23"/>
    </location>
</feature>
<reference key="1">
    <citation type="submission" date="2000-02" db="EMBL/GenBank/DDBJ databases">
        <title>Long branches in the seed plants and the root of the angiosperms.</title>
        <authorList>
            <person name="Graham S.W."/>
            <person name="Reeves P.A."/>
            <person name="Burns A."/>
            <person name="Olmstead R.G."/>
        </authorList>
    </citation>
    <scope>NUCLEOTIDE SEQUENCE [GENOMIC DNA]</scope>
</reference>
<accession>Q7HIV9</accession>
<evidence type="ECO:0000255" key="1">
    <source>
        <dbReference type="HAMAP-Rule" id="MF_00808"/>
    </source>
</evidence>
<name>PSBT_SAGLA</name>
<geneLocation type="chloroplast"/>
<organism>
    <name type="scientific">Sagittaria latifolia</name>
    <name type="common">Broadleaf arrowhead</name>
    <name type="synonym">Sagittaria chinensis</name>
    <dbReference type="NCBI Taxonomy" id="15008"/>
    <lineage>
        <taxon>Eukaryota</taxon>
        <taxon>Viridiplantae</taxon>
        <taxon>Streptophyta</taxon>
        <taxon>Embryophyta</taxon>
        <taxon>Tracheophyta</taxon>
        <taxon>Spermatophyta</taxon>
        <taxon>Magnoliopsida</taxon>
        <taxon>Liliopsida</taxon>
        <taxon>Alismataceae</taxon>
        <taxon>Sagittaria</taxon>
    </lineage>
</organism>